<feature type="chain" id="PRO_0000405205" description="Genome polyprotein">
    <location>
        <begin position="1"/>
        <end position="791" status="greater than"/>
    </location>
</feature>
<feature type="chain" id="PRO_0000037889" description="Capsid protein C" evidence="4">
    <location>
        <begin position="1"/>
        <end position="100"/>
    </location>
</feature>
<feature type="propeptide" id="PRO_0000037890" description="ER anchor for the capsid protein C, removed in mature form by serine protease NS3" evidence="4">
    <location>
        <begin position="101"/>
        <end position="114"/>
    </location>
</feature>
<feature type="chain" id="PRO_0000264652" description="Protein prM" evidence="4">
    <location>
        <begin position="115"/>
        <end position="280"/>
    </location>
</feature>
<feature type="chain" id="PRO_0000264653" description="Peptide pr" evidence="4">
    <location>
        <begin position="115"/>
        <end position="205"/>
    </location>
</feature>
<feature type="chain" id="PRO_0000037891" description="Small envelope protein M" evidence="4">
    <location>
        <begin position="206"/>
        <end position="280"/>
    </location>
</feature>
<feature type="chain" id="PRO_0000037892" description="Envelope protein E" evidence="4">
    <location>
        <begin position="281"/>
        <end position="775"/>
    </location>
</feature>
<feature type="chain" id="PRO_0000037893" description="Non-structural protein 1" evidence="4">
    <location>
        <begin position="776"/>
        <end position="791" status="greater than"/>
    </location>
</feature>
<feature type="topological domain" description="Cytoplasmic" evidence="6">
    <location>
        <begin position="1"/>
        <end position="101"/>
    </location>
</feature>
<feature type="transmembrane region" description="Helical" evidence="6">
    <location>
        <begin position="102"/>
        <end position="119"/>
    </location>
</feature>
<feature type="topological domain" description="Extracellular" evidence="6">
    <location>
        <begin position="120"/>
        <end position="242"/>
    </location>
</feature>
<feature type="transmembrane region" description="Helical" evidence="6">
    <location>
        <begin position="243"/>
        <end position="260"/>
    </location>
</feature>
<feature type="topological domain" description="Cytoplasmic" evidence="6">
    <location>
        <position position="261"/>
    </location>
</feature>
<feature type="transmembrane region" description="Helical" evidence="6">
    <location>
        <begin position="262"/>
        <end position="280"/>
    </location>
</feature>
<feature type="topological domain" description="Extracellular" evidence="6">
    <location>
        <begin position="281"/>
        <end position="725"/>
    </location>
</feature>
<feature type="transmembrane region" description="Helical" evidence="6">
    <location>
        <begin position="726"/>
        <end position="746"/>
    </location>
</feature>
<feature type="topological domain" description="Cytoplasmic" evidence="6">
    <location>
        <begin position="747"/>
        <end position="752"/>
    </location>
</feature>
<feature type="transmembrane region" description="Helical" evidence="6">
    <location>
        <begin position="753"/>
        <end position="775"/>
    </location>
</feature>
<feature type="topological domain" description="Extracellular" evidence="6">
    <location>
        <begin position="776"/>
        <end position="791" status="greater than"/>
    </location>
</feature>
<feature type="region of interest" description="Interaction with host EXOC1" evidence="3">
    <location>
        <begin position="1"/>
        <end position="15"/>
    </location>
</feature>
<feature type="region of interest" description="Hydrophobic; homodimerization of capsid protein C" evidence="4">
    <location>
        <begin position="37"/>
        <end position="72"/>
    </location>
</feature>
<feature type="region of interest" description="Fusion peptide" evidence="2">
    <location>
        <begin position="378"/>
        <end position="391"/>
    </location>
</feature>
<feature type="site" description="Cleavage; by viral protease NS3" evidence="4">
    <location>
        <begin position="100"/>
        <end position="101"/>
    </location>
</feature>
<feature type="site" description="Cleavage; by host signal peptidase" evidence="4">
    <location>
        <begin position="114"/>
        <end position="115"/>
    </location>
</feature>
<feature type="site" description="Cleavage; by host furin" evidence="4 6">
    <location>
        <begin position="205"/>
        <end position="206"/>
    </location>
</feature>
<feature type="site" description="Cleavage; by host signal peptidase" evidence="4">
    <location>
        <begin position="280"/>
        <end position="281"/>
    </location>
</feature>
<feature type="site" description="Cleavage; by host signal peptidase" evidence="4">
    <location>
        <begin position="775"/>
        <end position="776"/>
    </location>
</feature>
<feature type="glycosylation site" description="N-linked (GlcNAc...) asparagine; by host" evidence="6">
    <location>
        <position position="183"/>
    </location>
</feature>
<feature type="glycosylation site" description="N-linked (GlcNAc...) asparagine; by host" evidence="6">
    <location>
        <position position="347"/>
    </location>
</feature>
<feature type="glycosylation site" description="N-linked (GlcNAc...) asparagine; by host" evidence="6">
    <location>
        <position position="433"/>
    </location>
</feature>
<feature type="disulfide bond" evidence="3">
    <location>
        <begin position="283"/>
        <end position="310"/>
    </location>
</feature>
<feature type="disulfide bond" evidence="3">
    <location>
        <begin position="340"/>
        <end position="401"/>
    </location>
</feature>
<feature type="disulfide bond" evidence="3">
    <location>
        <begin position="354"/>
        <end position="385"/>
    </location>
</feature>
<feature type="disulfide bond" evidence="3">
    <location>
        <begin position="372"/>
        <end position="396"/>
    </location>
</feature>
<feature type="disulfide bond" evidence="3">
    <location>
        <begin position="465"/>
        <end position="565"/>
    </location>
</feature>
<feature type="disulfide bond" evidence="3">
    <location>
        <begin position="582"/>
        <end position="613"/>
    </location>
</feature>
<feature type="disulfide bond" evidence="3">
    <location>
        <begin position="779"/>
        <end position="790"/>
    </location>
</feature>
<feature type="non-terminal residue">
    <location>
        <position position="791"/>
    </location>
</feature>
<accession>P27913</accession>
<protein>
    <recommendedName>
        <fullName>Genome polyprotein</fullName>
    </recommendedName>
    <component>
        <recommendedName>
            <fullName>Capsid protein C</fullName>
        </recommendedName>
        <alternativeName>
            <fullName>Core protein</fullName>
        </alternativeName>
    </component>
    <component>
        <recommendedName>
            <fullName>Protein prM</fullName>
        </recommendedName>
    </component>
    <component>
        <recommendedName>
            <fullName>Peptide pr</fullName>
        </recommendedName>
    </component>
    <component>
        <recommendedName>
            <fullName>Small envelope protein M</fullName>
        </recommendedName>
        <alternativeName>
            <fullName>Matrix protein</fullName>
        </alternativeName>
    </component>
    <component>
        <recommendedName>
            <fullName>Envelope protein E</fullName>
        </recommendedName>
    </component>
    <component>
        <recommendedName>
            <fullName>Non-structural protein 1</fullName>
            <shortName>NS1</shortName>
        </recommendedName>
    </component>
</protein>
<sequence length="791" mass="86845">MNNQRKKTGRPSFNMLKRARNRVSTGSQLAKRFSKGLLSGQGPMKLVMAFIAFLRFLAIPPTAGILARWSSFKKNGAIKVLRGFKKEISSMLNIMNRRKRSVTMLLMLLPTALAFHLTTRGGEPTLIVSKQERGKSLLFKTSAGVNMCTLIAMDLGELCEDTMTYKCPRITERQPDDVDCWCNATDTWVTYGTCSQTGEHRRDKRSVALAPHVGLGLETRTETWMSSEGAWKQIQKVETWALRHPGFTVIGLFLAHAIGTSITQKGIIFILLMLVTPSMAMRCVGIGNRDFVEGLSGATWVDVVLEHGSCVTTMAKNKPTLDIELLKTEVTNPAVLRKLCIEAKISNTTTDSRCPTQGEATLVEEQDANFVCRRTFVDRGWGNGCGLFGKGSFLTCAKFKCVTKLEGKIVQYENLKYSVIVTVHTGDQHQVGNETTEHGTIATITPQAPTSEIQLTDYGALTLDCSPRTGLDFNRVVLLTMKKKSWLVHKQWFLDLPLPWTSGASTSQETWNRQDLLVTFKTAHAKKQEVVVLGSQEGAMHTALTGATEIQTSGTTTIFAGHLKCRLKMDKLTLKGMSYVMCTGSFKLEKEVAETQHGTVLVQVKYEGTDAPCKIPFSSQDEKGVTQNGRLITANPIVIDKEKPVNIEAEPPFGESYIVVGSGEKALKLSWFKKGSSIGKMFEATARGARRMAILGDTAWDFGSIGGVFTSVGKLIHQIFGTAYGILFSGVSWTMKIGIGILLTWLGLNSRSTSLSMTCIAVGMVTLYLGVMVQADSGCVINWKGKELKCG</sequence>
<organism>
    <name type="scientific">Dengue virus type 1 (strain Jamaica/CV1636/1977)</name>
    <name type="common">DENV-1</name>
    <dbReference type="NCBI Taxonomy" id="11058"/>
    <lineage>
        <taxon>Viruses</taxon>
        <taxon>Riboviria</taxon>
        <taxon>Orthornavirae</taxon>
        <taxon>Kitrinoviricota</taxon>
        <taxon>Flasuviricetes</taxon>
        <taxon>Amarillovirales</taxon>
        <taxon>Flaviviridae</taxon>
        <taxon>Orthoflavivirus</taxon>
        <taxon>Orthoflavivirus denguei</taxon>
        <taxon>Dengue virus</taxon>
    </lineage>
</organism>
<keyword id="KW-0167">Capsid protein</keyword>
<keyword id="KW-1165">Clathrin-mediated endocytosis of virus by host</keyword>
<keyword id="KW-0165">Cleavage on pair of basic residues</keyword>
<keyword id="KW-1015">Disulfide bond</keyword>
<keyword id="KW-1170">Fusion of virus membrane with host endosomal membrane</keyword>
<keyword id="KW-1168">Fusion of virus membrane with host membrane</keyword>
<keyword id="KW-0325">Glycoprotein</keyword>
<keyword id="KW-1035">Host cytoplasm</keyword>
<keyword id="KW-1038">Host endoplasmic reticulum</keyword>
<keyword id="KW-1043">Host membrane</keyword>
<keyword id="KW-1048">Host nucleus</keyword>
<keyword id="KW-0945">Host-virus interaction</keyword>
<keyword id="KW-1090">Inhibition of host innate immune response by virus</keyword>
<keyword id="KW-0472">Membrane</keyword>
<keyword id="KW-0964">Secreted</keyword>
<keyword id="KW-0941">Suppressor of RNA silencing</keyword>
<keyword id="KW-0812">Transmembrane</keyword>
<keyword id="KW-1133">Transmembrane helix</keyword>
<keyword id="KW-1161">Viral attachment to host cell</keyword>
<keyword id="KW-0261">Viral envelope protein</keyword>
<keyword id="KW-0899">Viral immunoevasion</keyword>
<keyword id="KW-0543">Viral nucleoprotein</keyword>
<keyword id="KW-1162">Viral penetration into host cytoplasm</keyword>
<keyword id="KW-0946">Virion</keyword>
<keyword id="KW-1164">Virus endocytosis by host</keyword>
<keyword id="KW-1160">Virus entry into host cell</keyword>
<keyword id="KW-0862">Zinc</keyword>
<organismHost>
    <name type="scientific">Aedes aegypti</name>
    <name type="common">Yellowfever mosquito</name>
    <name type="synonym">Culex aegypti</name>
    <dbReference type="NCBI Taxonomy" id="7159"/>
</organismHost>
<organismHost>
    <name type="scientific">Aedes albopictus</name>
    <name type="common">Asian tiger mosquito</name>
    <name type="synonym">Stegomyia albopicta</name>
    <dbReference type="NCBI Taxonomy" id="7160"/>
</organismHost>
<organismHost>
    <name type="scientific">Homo sapiens</name>
    <name type="common">Human</name>
    <dbReference type="NCBI Taxonomy" id="9606"/>
</organismHost>
<dbReference type="EMBL" id="D00501">
    <property type="protein sequence ID" value="BAA00393.1"/>
    <property type="molecule type" value="Genomic_RNA"/>
</dbReference>
<dbReference type="PIR" id="A32401">
    <property type="entry name" value="A32401"/>
</dbReference>
<dbReference type="SMR" id="P27913"/>
<dbReference type="GO" id="GO:0005576">
    <property type="term" value="C:extracellular region"/>
    <property type="evidence" value="ECO:0007669"/>
    <property type="project" value="UniProtKB-SubCell"/>
</dbReference>
<dbReference type="GO" id="GO:0044167">
    <property type="term" value="C:host cell endoplasmic reticulum membrane"/>
    <property type="evidence" value="ECO:0007669"/>
    <property type="project" value="UniProtKB-SubCell"/>
</dbReference>
<dbReference type="GO" id="GO:0042025">
    <property type="term" value="C:host cell nucleus"/>
    <property type="evidence" value="ECO:0007669"/>
    <property type="project" value="UniProtKB-SubCell"/>
</dbReference>
<dbReference type="GO" id="GO:0044220">
    <property type="term" value="C:host cell perinuclear region of cytoplasm"/>
    <property type="evidence" value="ECO:0007669"/>
    <property type="project" value="UniProtKB-SubCell"/>
</dbReference>
<dbReference type="GO" id="GO:0016020">
    <property type="term" value="C:membrane"/>
    <property type="evidence" value="ECO:0007669"/>
    <property type="project" value="UniProtKB-KW"/>
</dbReference>
<dbReference type="GO" id="GO:0019031">
    <property type="term" value="C:viral envelope"/>
    <property type="evidence" value="ECO:0007669"/>
    <property type="project" value="UniProtKB-KW"/>
</dbReference>
<dbReference type="GO" id="GO:0019013">
    <property type="term" value="C:viral nucleocapsid"/>
    <property type="evidence" value="ECO:0007669"/>
    <property type="project" value="UniProtKB-KW"/>
</dbReference>
<dbReference type="GO" id="GO:0055036">
    <property type="term" value="C:virion membrane"/>
    <property type="evidence" value="ECO:0007669"/>
    <property type="project" value="UniProtKB-SubCell"/>
</dbReference>
<dbReference type="GO" id="GO:0008289">
    <property type="term" value="F:lipid binding"/>
    <property type="evidence" value="ECO:0000314"/>
    <property type="project" value="DisProt"/>
</dbReference>
<dbReference type="GO" id="GO:0046983">
    <property type="term" value="F:protein dimerization activity"/>
    <property type="evidence" value="ECO:0007669"/>
    <property type="project" value="InterPro"/>
</dbReference>
<dbReference type="GO" id="GO:0005198">
    <property type="term" value="F:structural molecule activity"/>
    <property type="evidence" value="ECO:0007669"/>
    <property type="project" value="InterPro"/>
</dbReference>
<dbReference type="GO" id="GO:0075512">
    <property type="term" value="P:clathrin-dependent endocytosis of virus by host cell"/>
    <property type="evidence" value="ECO:0007669"/>
    <property type="project" value="UniProtKB-KW"/>
</dbReference>
<dbReference type="GO" id="GO:0039654">
    <property type="term" value="P:fusion of virus membrane with host endosome membrane"/>
    <property type="evidence" value="ECO:0007669"/>
    <property type="project" value="UniProtKB-KW"/>
</dbReference>
<dbReference type="GO" id="GO:0052170">
    <property type="term" value="P:symbiont-mediated suppression of host innate immune response"/>
    <property type="evidence" value="ECO:0007669"/>
    <property type="project" value="UniProtKB-KW"/>
</dbReference>
<dbReference type="GO" id="GO:0019062">
    <property type="term" value="P:virion attachment to host cell"/>
    <property type="evidence" value="ECO:0007669"/>
    <property type="project" value="UniProtKB-KW"/>
</dbReference>
<dbReference type="CDD" id="cd12149">
    <property type="entry name" value="Flavi_E_C"/>
    <property type="match status" value="1"/>
</dbReference>
<dbReference type="CDD" id="cd17038">
    <property type="entry name" value="Flavi_M"/>
    <property type="match status" value="1"/>
</dbReference>
<dbReference type="FunFam" id="1.20.1280.260:FF:000001">
    <property type="entry name" value="Envelope glycoprotein"/>
    <property type="match status" value="1"/>
</dbReference>
<dbReference type="FunFam" id="2.60.40.350:FF:000001">
    <property type="entry name" value="Envelope glycoprotein"/>
    <property type="match status" value="1"/>
</dbReference>
<dbReference type="FunFam" id="1.10.10.930:FF:000001">
    <property type="entry name" value="Genome polyprotein"/>
    <property type="match status" value="1"/>
</dbReference>
<dbReference type="FunFam" id="2.60.260.50:FF:000001">
    <property type="entry name" value="Genome polyprotein"/>
    <property type="match status" value="1"/>
</dbReference>
<dbReference type="Gene3D" id="1.10.10.930">
    <property type="match status" value="1"/>
</dbReference>
<dbReference type="Gene3D" id="1.20.1280.260">
    <property type="match status" value="1"/>
</dbReference>
<dbReference type="Gene3D" id="2.60.40.350">
    <property type="match status" value="1"/>
</dbReference>
<dbReference type="Gene3D" id="1.10.8.970">
    <property type="entry name" value="Flavivirus envelope glycoprotein M-like"/>
    <property type="match status" value="1"/>
</dbReference>
<dbReference type="Gene3D" id="2.60.260.50">
    <property type="entry name" value="Flavivirus polyprotein propeptide domain"/>
    <property type="match status" value="1"/>
</dbReference>
<dbReference type="Gene3D" id="2.60.98.10">
    <property type="entry name" value="Tick-borne Encephalitis virus Glycoprotein, domain 1"/>
    <property type="match status" value="1"/>
</dbReference>
<dbReference type="Gene3D" id="3.30.67.10">
    <property type="entry name" value="Viral Envelope Glycoprotein, domain 2"/>
    <property type="match status" value="1"/>
</dbReference>
<dbReference type="Gene3D" id="3.30.387.10">
    <property type="entry name" value="Viral Envelope Glycoprotein, domain 3"/>
    <property type="match status" value="1"/>
</dbReference>
<dbReference type="InterPro" id="IPR000069">
    <property type="entry name" value="Env_glycoprot_M_flavivir"/>
</dbReference>
<dbReference type="InterPro" id="IPR038302">
    <property type="entry name" value="Env_glycoprot_M_sf_flavivir"/>
</dbReference>
<dbReference type="InterPro" id="IPR013755">
    <property type="entry name" value="Flav_gly_cen_dom_subdom1"/>
</dbReference>
<dbReference type="InterPro" id="IPR001122">
    <property type="entry name" value="Flavi_capsidC"/>
</dbReference>
<dbReference type="InterPro" id="IPR037172">
    <property type="entry name" value="Flavi_capsidC_sf"/>
</dbReference>
<dbReference type="InterPro" id="IPR027287">
    <property type="entry name" value="Flavi_E_Ig-like"/>
</dbReference>
<dbReference type="InterPro" id="IPR026470">
    <property type="entry name" value="Flavi_E_Stem/Anchor_dom"/>
</dbReference>
<dbReference type="InterPro" id="IPR038345">
    <property type="entry name" value="Flavi_E_Stem/Anchor_dom_sf"/>
</dbReference>
<dbReference type="InterPro" id="IPR011998">
    <property type="entry name" value="Flavi_Glycoprot_E_cen/dimer"/>
</dbReference>
<dbReference type="InterPro" id="IPR002535">
    <property type="entry name" value="Flavi_propep"/>
</dbReference>
<dbReference type="InterPro" id="IPR038688">
    <property type="entry name" value="Flavi_propep_sf"/>
</dbReference>
<dbReference type="InterPro" id="IPR000336">
    <property type="entry name" value="Flavivir/Alphavir_Ig-like_sf"/>
</dbReference>
<dbReference type="InterPro" id="IPR036253">
    <property type="entry name" value="Glycoprot_cen/dimer_sf"/>
</dbReference>
<dbReference type="InterPro" id="IPR038055">
    <property type="entry name" value="Glycoprot_E_dimer_dom"/>
</dbReference>
<dbReference type="InterPro" id="IPR013756">
    <property type="entry name" value="GlyE_cen_dom_subdom2"/>
</dbReference>
<dbReference type="InterPro" id="IPR014756">
    <property type="entry name" value="Ig_E-set"/>
</dbReference>
<dbReference type="NCBIfam" id="TIGR04240">
    <property type="entry name" value="flavi_E_stem"/>
    <property type="match status" value="1"/>
</dbReference>
<dbReference type="Pfam" id="PF01003">
    <property type="entry name" value="Flavi_capsid"/>
    <property type="match status" value="1"/>
</dbReference>
<dbReference type="Pfam" id="PF21659">
    <property type="entry name" value="Flavi_E_stem"/>
    <property type="match status" value="1"/>
</dbReference>
<dbReference type="Pfam" id="PF02832">
    <property type="entry name" value="Flavi_glycop_C"/>
    <property type="match status" value="1"/>
</dbReference>
<dbReference type="Pfam" id="PF00869">
    <property type="entry name" value="Flavi_glycoprot"/>
    <property type="match status" value="1"/>
</dbReference>
<dbReference type="Pfam" id="PF01004">
    <property type="entry name" value="Flavi_M"/>
    <property type="match status" value="1"/>
</dbReference>
<dbReference type="Pfam" id="PF01570">
    <property type="entry name" value="Flavi_propep"/>
    <property type="match status" value="1"/>
</dbReference>
<dbReference type="SUPFAM" id="SSF81296">
    <property type="entry name" value="E set domains"/>
    <property type="match status" value="1"/>
</dbReference>
<dbReference type="SUPFAM" id="SSF101257">
    <property type="entry name" value="Flavivirus capsid protein C"/>
    <property type="match status" value="1"/>
</dbReference>
<dbReference type="SUPFAM" id="SSF56983">
    <property type="entry name" value="Viral glycoprotein, central and dimerisation domains"/>
    <property type="match status" value="1"/>
</dbReference>
<comment type="function">
    <molecule>Capsid protein C</molecule>
    <text evidence="3">Plays a role in virus budding by binding to the cell membrane and gathering the viral RNA into a nucleocapsid that forms the core of a mature virus particle. During virus entry, may induce genome penetration into the host cytoplasm after hemifusion induced by the surface proteins. Can migrate to the cell nucleus where it modulates host functions. Overcomes the anti-viral effects of host EXOC1 by sequestering and degrading the latter through the proteasome degradation pathway.</text>
</comment>
<comment type="function">
    <molecule>Capsid protein C</molecule>
    <text evidence="1">Inhibits RNA silencing by interfering with host Dicer.</text>
</comment>
<comment type="function">
    <molecule>Peptide pr</molecule>
    <text evidence="3">Prevents premature fusion activity of envelope proteins in trans-Golgi by binding to envelope protein E at pH6.0. After virion release in extracellular space, gets dissociated from E dimers.</text>
</comment>
<comment type="function">
    <molecule>Protein prM</molecule>
    <text evidence="3">Acts as a chaperone for envelope protein E during intracellular virion assembly by masking and inactivating envelope protein E fusion peptide. prM is the only viral peptide matured by host furin in the trans-Golgi network probably to avoid catastrophic activation of the viral fusion activity in acidic GolGi compartment prior to virion release. prM-E cleavage is inefficient, and many virions are only partially matured. These uncleaved prM would play a role in immune evasion.</text>
</comment>
<comment type="function">
    <molecule>Small envelope protein M</molecule>
    <text evidence="3">May play a role in virus budding. Exerts cytotoxic effects by activating a mitochondrial apoptotic pathway through M ectodomain. May display a viroporin activity.</text>
</comment>
<comment type="function">
    <molecule>Envelope protein E</molecule>
    <text evidence="3">Binds to host cell surface receptor and mediates fusion between viral and cellular membranes. Envelope protein is synthesized in the endoplasmic reticulum in the form of heterodimer with protein prM. They play a role in virion budding in the ER, and the newly formed immature particle is covered with 60 spikes composed of heterodimer between precursor prM and envelope protein E. The virion is transported to the Golgi apparatus where the low pH causes dissociation of PrM-E heterodimers and formation of E homodimers. prM-E cleavage is inefficient, and many virions are only partially matured. These uncleaved prM would play a role in immune evasion.</text>
</comment>
<comment type="function">
    <molecule>Non-structural protein 1</molecule>
    <text evidence="5">Involved in immune evasion, pathogenesis and viral replication. Once cleaved off the polyprotein, is targeted to three destinations: the viral replication cycle, the plasma membrane and the extracellular compartment. Essential for viral replication. Required for formation of the replication complex and recruitment of other non-structural proteins to the ER-derived membrane structures. Excreted as a hexameric lipoparticle that plays a role against host immune response. Antagonizing the complement function. Binds to the host macrophages and dendritic cells. Inhibits signal transduction originating from Toll-like receptor 3 (TLR3).</text>
</comment>
<comment type="function">
    <molecule>Non-structural protein 1</molecule>
    <text evidence="3">Disrupts the host endothelial glycocalyx layer of host pulmonary microvascular endothelial cells, inducing degradation of sialic acid and shedding of heparan sulfate proteoglycans. NS1 induces expression of sialidases, heparanase, and activates cathepsin L, which activates heparanase via enzymatic cleavage. These effects are probably linked to the endothelial hyperpermeability observed in severe dengue disease.</text>
</comment>
<comment type="subunit">
    <molecule>Capsid protein C</molecule>
    <text evidence="3">Homodimer. Interacts (via N-terminus) with host EXOC1 (via C-terminus); this interaction results in EXOC1 degradation through the proteasome degradation pathway.</text>
</comment>
<comment type="subunit">
    <molecule>Protein prM</molecule>
    <text evidence="3">Forms heterodimers with envelope protein E in the endoplasmic reticulum and Golgi.</text>
</comment>
<comment type="subunit">
    <molecule>Envelope protein E</molecule>
    <text evidence="3">Homodimer; in the endoplasmic reticulum and Golgi. Interacts with protein prM. Interacts with non-structural protein 1.</text>
</comment>
<comment type="subunit">
    <molecule>Non-structural protein 1</molecule>
    <text evidence="3">Homodimer; Homohexamer when secreted. Interacts with envelope protein E.</text>
</comment>
<comment type="subcellular location">
    <molecule>Capsid protein C</molecule>
    <subcellularLocation>
        <location evidence="3">Virion</location>
    </subcellularLocation>
    <subcellularLocation>
        <location evidence="3">Host nucleus</location>
    </subcellularLocation>
    <subcellularLocation>
        <location evidence="3">Host cytoplasm</location>
    </subcellularLocation>
    <subcellularLocation>
        <location evidence="3">Host cytoplasm</location>
        <location evidence="3">Host perinuclear region</location>
    </subcellularLocation>
</comment>
<comment type="subcellular location">
    <molecule>Peptide pr</molecule>
    <subcellularLocation>
        <location evidence="3">Secreted</location>
    </subcellularLocation>
</comment>
<comment type="subcellular location">
    <molecule>Small envelope protein M</molecule>
    <subcellularLocation>
        <location evidence="3">Virion membrane</location>
        <topology evidence="6">Multi-pass membrane protein</topology>
    </subcellularLocation>
    <subcellularLocation>
        <location evidence="3">Host endoplasmic reticulum membrane</location>
        <topology evidence="6">Multi-pass membrane protein</topology>
    </subcellularLocation>
</comment>
<comment type="subcellular location">
    <molecule>Envelope protein E</molecule>
    <subcellularLocation>
        <location evidence="3">Virion membrane</location>
        <topology evidence="6">Multi-pass membrane protein</topology>
    </subcellularLocation>
    <subcellularLocation>
        <location evidence="3">Host endoplasmic reticulum membrane</location>
        <topology evidence="6">Multi-pass membrane protein</topology>
    </subcellularLocation>
</comment>
<comment type="subcellular location">
    <molecule>Non-structural protein 1</molecule>
    <subcellularLocation>
        <location evidence="3">Secreted</location>
    </subcellularLocation>
    <subcellularLocation>
        <location>Host endoplasmic reticulum membrane</location>
        <topology>Peripheral membrane protein</topology>
        <orientation evidence="3">Lumenal side</orientation>
    </subcellularLocation>
    <text evidence="5">Located in RE-derived vesicles hosting the replication complex.</text>
</comment>
<comment type="domain">
    <text evidence="3">The transmembrane domains of the small envelope protein M and envelope protein E contain an endoplasmic reticulum retention signal.</text>
</comment>
<comment type="PTM">
    <molecule>Genome polyprotein</molecule>
    <text evidence="3">Specific enzymatic cleavages in vivo yield mature proteins. Cleavages in the lumen of endoplasmic reticulum are performed by host signal peptidase, wereas cleavages in the cytoplasmic side are performed by serine protease NS3. Signal cleavage at the 2K-4B site requires a prior NS3 protease-mediated cleavage at the 4A-2K site.</text>
</comment>
<comment type="PTM">
    <molecule>Envelope protein E</molecule>
    <text evidence="3">N-glycosylated.</text>
</comment>
<comment type="PTM">
    <molecule>Non-structural protein 1</molecule>
    <text evidence="3">N-glycosylated. The excreted form is glycosylated and this is required for efficient secretion of the protein from infected cells.</text>
</comment>
<proteinExistence type="inferred from homology"/>
<name>POLG_DEN1C</name>
<evidence type="ECO:0000250" key="1">
    <source>
        <dbReference type="UniProtKB" id="P03314"/>
    </source>
</evidence>
<evidence type="ECO:0000250" key="2">
    <source>
        <dbReference type="UniProtKB" id="P14336"/>
    </source>
</evidence>
<evidence type="ECO:0000250" key="3">
    <source>
        <dbReference type="UniProtKB" id="P17763"/>
    </source>
</evidence>
<evidence type="ECO:0000250" key="4">
    <source>
        <dbReference type="UniProtKB" id="P29990"/>
    </source>
</evidence>
<evidence type="ECO:0000250" key="5">
    <source>
        <dbReference type="UniProtKB" id="Q9Q6P4"/>
    </source>
</evidence>
<evidence type="ECO:0000255" key="6"/>
<reference key="1">
    <citation type="journal article" date="1989" name="J. Gen. Virol.">
        <title>Genetic relatedness among structural protein genes of dengue 1 virus strains.</title>
        <authorList>
            <person name="Chu M.C."/>
            <person name="O'Rourke E.J."/>
            <person name="Trent D.W."/>
        </authorList>
    </citation>
    <scope>NUCLEOTIDE SEQUENCE [GENOMIC RNA]</scope>
</reference>